<comment type="function">
    <text evidence="1">Produces ATP from ADP in the presence of a proton gradient across the membrane. The alpha chain is a regulatory subunit.</text>
</comment>
<comment type="catalytic activity">
    <reaction evidence="1">
        <text>ATP + H2O + 4 H(+)(in) = ADP + phosphate + 5 H(+)(out)</text>
        <dbReference type="Rhea" id="RHEA:57720"/>
        <dbReference type="ChEBI" id="CHEBI:15377"/>
        <dbReference type="ChEBI" id="CHEBI:15378"/>
        <dbReference type="ChEBI" id="CHEBI:30616"/>
        <dbReference type="ChEBI" id="CHEBI:43474"/>
        <dbReference type="ChEBI" id="CHEBI:456216"/>
        <dbReference type="EC" id="7.1.2.2"/>
    </reaction>
</comment>
<comment type="subunit">
    <text evidence="1">F-type ATPases have 2 components, CF(1) - the catalytic core - and CF(0) - the membrane proton channel. CF(1) has five subunits: alpha(3), beta(3), gamma(1), delta(1), epsilon(1). CF(0) has three main subunits: a(1), b(2) and c(9-12). The alpha and beta chains form an alternating ring which encloses part of the gamma chain. CF(1) is attached to CF(0) by a central stalk formed by the gamma and epsilon chains, while a peripheral stalk is formed by the delta and b chains.</text>
</comment>
<comment type="subcellular location">
    <subcellularLocation>
        <location evidence="1">Cell inner membrane</location>
        <topology evidence="1">Peripheral membrane protein</topology>
    </subcellularLocation>
</comment>
<comment type="similarity">
    <text evidence="1">Belongs to the ATPase alpha/beta chains family.</text>
</comment>
<keyword id="KW-0066">ATP synthesis</keyword>
<keyword id="KW-0067">ATP-binding</keyword>
<keyword id="KW-0997">Cell inner membrane</keyword>
<keyword id="KW-1003">Cell membrane</keyword>
<keyword id="KW-0139">CF(1)</keyword>
<keyword id="KW-0375">Hydrogen ion transport</keyword>
<keyword id="KW-0406">Ion transport</keyword>
<keyword id="KW-0472">Membrane</keyword>
<keyword id="KW-0547">Nucleotide-binding</keyword>
<keyword id="KW-1278">Translocase</keyword>
<keyword id="KW-0813">Transport</keyword>
<dbReference type="EC" id="7.1.2.2" evidence="1"/>
<dbReference type="EMBL" id="CP001197">
    <property type="protein sequence ID" value="ACL09767.1"/>
    <property type="molecule type" value="Genomic_DNA"/>
</dbReference>
<dbReference type="SMR" id="B8DRD0"/>
<dbReference type="STRING" id="883.DvMF_2829"/>
<dbReference type="KEGG" id="dvm:DvMF_2829"/>
<dbReference type="eggNOG" id="COG0056">
    <property type="taxonomic scope" value="Bacteria"/>
</dbReference>
<dbReference type="HOGENOM" id="CLU_010091_2_1_7"/>
<dbReference type="OrthoDB" id="9803053at2"/>
<dbReference type="GO" id="GO:0005886">
    <property type="term" value="C:plasma membrane"/>
    <property type="evidence" value="ECO:0007669"/>
    <property type="project" value="UniProtKB-SubCell"/>
</dbReference>
<dbReference type="GO" id="GO:0045259">
    <property type="term" value="C:proton-transporting ATP synthase complex"/>
    <property type="evidence" value="ECO:0007669"/>
    <property type="project" value="UniProtKB-KW"/>
</dbReference>
<dbReference type="GO" id="GO:0043531">
    <property type="term" value="F:ADP binding"/>
    <property type="evidence" value="ECO:0007669"/>
    <property type="project" value="TreeGrafter"/>
</dbReference>
<dbReference type="GO" id="GO:0005524">
    <property type="term" value="F:ATP binding"/>
    <property type="evidence" value="ECO:0007669"/>
    <property type="project" value="UniProtKB-UniRule"/>
</dbReference>
<dbReference type="GO" id="GO:0046933">
    <property type="term" value="F:proton-transporting ATP synthase activity, rotational mechanism"/>
    <property type="evidence" value="ECO:0007669"/>
    <property type="project" value="UniProtKB-UniRule"/>
</dbReference>
<dbReference type="CDD" id="cd18113">
    <property type="entry name" value="ATP-synt_F1_alpha_C"/>
    <property type="match status" value="1"/>
</dbReference>
<dbReference type="CDD" id="cd18116">
    <property type="entry name" value="ATP-synt_F1_alpha_N"/>
    <property type="match status" value="1"/>
</dbReference>
<dbReference type="CDD" id="cd01132">
    <property type="entry name" value="F1-ATPase_alpha_CD"/>
    <property type="match status" value="1"/>
</dbReference>
<dbReference type="FunFam" id="1.20.150.20:FF:000001">
    <property type="entry name" value="ATP synthase subunit alpha"/>
    <property type="match status" value="1"/>
</dbReference>
<dbReference type="FunFam" id="2.40.30.20:FF:000001">
    <property type="entry name" value="ATP synthase subunit alpha"/>
    <property type="match status" value="1"/>
</dbReference>
<dbReference type="FunFam" id="3.40.50.300:FF:000002">
    <property type="entry name" value="ATP synthase subunit alpha"/>
    <property type="match status" value="1"/>
</dbReference>
<dbReference type="Gene3D" id="2.40.30.20">
    <property type="match status" value="1"/>
</dbReference>
<dbReference type="Gene3D" id="1.20.150.20">
    <property type="entry name" value="ATP synthase alpha/beta chain, C-terminal domain"/>
    <property type="match status" value="1"/>
</dbReference>
<dbReference type="Gene3D" id="3.40.50.300">
    <property type="entry name" value="P-loop containing nucleotide triphosphate hydrolases"/>
    <property type="match status" value="1"/>
</dbReference>
<dbReference type="HAMAP" id="MF_01346">
    <property type="entry name" value="ATP_synth_alpha_bact"/>
    <property type="match status" value="1"/>
</dbReference>
<dbReference type="InterPro" id="IPR023366">
    <property type="entry name" value="ATP_synth_asu-like_sf"/>
</dbReference>
<dbReference type="InterPro" id="IPR000793">
    <property type="entry name" value="ATP_synth_asu_C"/>
</dbReference>
<dbReference type="InterPro" id="IPR038376">
    <property type="entry name" value="ATP_synth_asu_C_sf"/>
</dbReference>
<dbReference type="InterPro" id="IPR033732">
    <property type="entry name" value="ATP_synth_F1_a_nt-bd_dom"/>
</dbReference>
<dbReference type="InterPro" id="IPR005294">
    <property type="entry name" value="ATP_synth_F1_asu"/>
</dbReference>
<dbReference type="InterPro" id="IPR020003">
    <property type="entry name" value="ATPase_a/bsu_AS"/>
</dbReference>
<dbReference type="InterPro" id="IPR004100">
    <property type="entry name" value="ATPase_F1/V1/A1_a/bsu_N"/>
</dbReference>
<dbReference type="InterPro" id="IPR036121">
    <property type="entry name" value="ATPase_F1/V1/A1_a/bsu_N_sf"/>
</dbReference>
<dbReference type="InterPro" id="IPR000194">
    <property type="entry name" value="ATPase_F1/V1/A1_a/bsu_nucl-bd"/>
</dbReference>
<dbReference type="InterPro" id="IPR027417">
    <property type="entry name" value="P-loop_NTPase"/>
</dbReference>
<dbReference type="NCBIfam" id="TIGR00962">
    <property type="entry name" value="atpA"/>
    <property type="match status" value="1"/>
</dbReference>
<dbReference type="NCBIfam" id="NF009884">
    <property type="entry name" value="PRK13343.1"/>
    <property type="match status" value="1"/>
</dbReference>
<dbReference type="PANTHER" id="PTHR48082">
    <property type="entry name" value="ATP SYNTHASE SUBUNIT ALPHA, MITOCHONDRIAL"/>
    <property type="match status" value="1"/>
</dbReference>
<dbReference type="PANTHER" id="PTHR48082:SF2">
    <property type="entry name" value="ATP SYNTHASE SUBUNIT ALPHA, MITOCHONDRIAL"/>
    <property type="match status" value="1"/>
</dbReference>
<dbReference type="Pfam" id="PF00006">
    <property type="entry name" value="ATP-synt_ab"/>
    <property type="match status" value="1"/>
</dbReference>
<dbReference type="Pfam" id="PF00306">
    <property type="entry name" value="ATP-synt_ab_C"/>
    <property type="match status" value="1"/>
</dbReference>
<dbReference type="Pfam" id="PF02874">
    <property type="entry name" value="ATP-synt_ab_N"/>
    <property type="match status" value="1"/>
</dbReference>
<dbReference type="PIRSF" id="PIRSF039088">
    <property type="entry name" value="F_ATPase_subunit_alpha"/>
    <property type="match status" value="1"/>
</dbReference>
<dbReference type="SUPFAM" id="SSF47917">
    <property type="entry name" value="C-terminal domain of alpha and beta subunits of F1 ATP synthase"/>
    <property type="match status" value="1"/>
</dbReference>
<dbReference type="SUPFAM" id="SSF50615">
    <property type="entry name" value="N-terminal domain of alpha and beta subunits of F1 ATP synthase"/>
    <property type="match status" value="1"/>
</dbReference>
<dbReference type="SUPFAM" id="SSF52540">
    <property type="entry name" value="P-loop containing nucleoside triphosphate hydrolases"/>
    <property type="match status" value="1"/>
</dbReference>
<dbReference type="PROSITE" id="PS00152">
    <property type="entry name" value="ATPASE_ALPHA_BETA"/>
    <property type="match status" value="1"/>
</dbReference>
<accession>B8DRD0</accession>
<protein>
    <recommendedName>
        <fullName evidence="1">ATP synthase subunit alpha</fullName>
        <ecNumber evidence="1">7.1.2.2</ecNumber>
    </recommendedName>
    <alternativeName>
        <fullName evidence="1">ATP synthase F1 sector subunit alpha</fullName>
    </alternativeName>
    <alternativeName>
        <fullName evidence="1">F-ATPase subunit alpha</fullName>
    </alternativeName>
</protein>
<sequence length="502" mass="54586">MQIKAEEISKIIEEQIQSYEQRVEMSETGTVLSVGDGIARVYGVRNAMAMELLEFPGGLMGMVLNLEEDNVGVALLGEDTGIKEGDPVKRTGKIFSVPVGDEVMGRVLNPLGQPIDGLGPLEAKEFRPVELKAPGIIARKSVHQPMPTGIKAIDAMTPIGRGQRELIIGDRQTGKTAVCIDAILAQRDTGIRCFYVAIGQKKATVALVADTLRKHGAMEYTTIISATASEPAPLQFISAYSGCTMAEFYRDKGDHALIIYDDLSKQAVAYRQMSLLLRRPPGREAYPGDVFYLHSRLLERAAKVNDSLGAGSLTALPIIETQAGDVSAYIPTNVISITDGQVYLEPNLFNAGIRPAINVGLSVSRVGGAAQIKAMKQVAGTMRLDLAQYRELAAFAQFGSDLDKATKQKLDRGARLVELLKQPQYQPMPVEQQVASMYAATRGLMDDVPVLAIRKFEAEMLDFLKNSKADILNDIKTKKALDADIEDRLKAAVAEFKKGFQA</sequence>
<gene>
    <name evidence="1" type="primary">atpA</name>
    <name type="ordered locus">DvMF_2829</name>
</gene>
<feature type="chain" id="PRO_1000143369" description="ATP synthase subunit alpha">
    <location>
        <begin position="1"/>
        <end position="502"/>
    </location>
</feature>
<feature type="binding site" evidence="1">
    <location>
        <begin position="169"/>
        <end position="176"/>
    </location>
    <ligand>
        <name>ATP</name>
        <dbReference type="ChEBI" id="CHEBI:30616"/>
    </ligand>
</feature>
<feature type="site" description="Required for activity" evidence="1">
    <location>
        <position position="362"/>
    </location>
</feature>
<reference key="1">
    <citation type="submission" date="2008-10" db="EMBL/GenBank/DDBJ databases">
        <title>Complete sequence of Desulfovibrio vulgaris str. 'Miyazaki F'.</title>
        <authorList>
            <person name="Lucas S."/>
            <person name="Copeland A."/>
            <person name="Lapidus A."/>
            <person name="Glavina del Rio T."/>
            <person name="Dalin E."/>
            <person name="Tice H."/>
            <person name="Bruce D."/>
            <person name="Goodwin L."/>
            <person name="Pitluck S."/>
            <person name="Sims D."/>
            <person name="Brettin T."/>
            <person name="Detter J.C."/>
            <person name="Han C."/>
            <person name="Larimer F."/>
            <person name="Land M."/>
            <person name="Hauser L."/>
            <person name="Kyrpides N."/>
            <person name="Mikhailova N."/>
            <person name="Hazen T.C."/>
            <person name="Richardson P."/>
        </authorList>
    </citation>
    <scope>NUCLEOTIDE SEQUENCE [LARGE SCALE GENOMIC DNA]</scope>
    <source>
        <strain>DSM 19637 / Miyazaki F</strain>
    </source>
</reference>
<proteinExistence type="inferred from homology"/>
<evidence type="ECO:0000255" key="1">
    <source>
        <dbReference type="HAMAP-Rule" id="MF_01346"/>
    </source>
</evidence>
<name>ATPA_NITV9</name>
<organism>
    <name type="scientific">Nitratidesulfovibrio vulgaris (strain DSM 19637 / Miyazaki F)</name>
    <name type="common">Desulfovibrio vulgaris</name>
    <dbReference type="NCBI Taxonomy" id="883"/>
    <lineage>
        <taxon>Bacteria</taxon>
        <taxon>Pseudomonadati</taxon>
        <taxon>Thermodesulfobacteriota</taxon>
        <taxon>Desulfovibrionia</taxon>
        <taxon>Desulfovibrionales</taxon>
        <taxon>Desulfovibrionaceae</taxon>
        <taxon>Nitratidesulfovibrio</taxon>
    </lineage>
</organism>